<protein>
    <recommendedName>
        <fullName>Doublesex- and mab-3-related transcription factor 1</fullName>
    </recommendedName>
</protein>
<feature type="chain" id="PRO_0000207043" description="Doublesex- and mab-3-related transcription factor 1">
    <location>
        <begin position="1"/>
        <end position="374"/>
    </location>
</feature>
<feature type="DNA-binding region" description="DM" evidence="1">
    <location>
        <begin position="70"/>
        <end position="116"/>
    </location>
</feature>
<feature type="region of interest" description="Disordered" evidence="2">
    <location>
        <begin position="1"/>
        <end position="73"/>
    </location>
</feature>
<feature type="region of interest" description="Disordered" evidence="2">
    <location>
        <begin position="154"/>
        <end position="176"/>
    </location>
</feature>
<feature type="region of interest" description="Disordered" evidence="2">
    <location>
        <begin position="317"/>
        <end position="374"/>
    </location>
</feature>
<feature type="compositionally biased region" description="Low complexity" evidence="2">
    <location>
        <begin position="24"/>
        <end position="40"/>
    </location>
</feature>
<feature type="compositionally biased region" description="Gly residues" evidence="2">
    <location>
        <begin position="41"/>
        <end position="63"/>
    </location>
</feature>
<feature type="compositionally biased region" description="Low complexity" evidence="2">
    <location>
        <begin position="326"/>
        <end position="346"/>
    </location>
</feature>
<feature type="compositionally biased region" description="Polar residues" evidence="2">
    <location>
        <begin position="354"/>
        <end position="364"/>
    </location>
</feature>
<feature type="modified residue" description="Phosphoserine" evidence="13">
    <location>
        <position position="337"/>
    </location>
</feature>
<feature type="splice variant" id="VSP_042963" description="In isoform 3." evidence="11">
    <location>
        <begin position="1"/>
        <end position="180"/>
    </location>
</feature>
<feature type="splice variant" id="VSP_042964" description="In isoform 4." evidence="11">
    <original>EGRMVIQDIPAVTSRGHMENTSDLVSDPAYYSSFYQPSLFPYYNNLYNYPQYSMALSAESSSGEVGNSLGGSPVKNSLRSLPAPYVPAQTGNQWQMKTSESRHPVSSQYRMHSYYGPPSYLGQSMSQIFTFEEGPSYSEAKASVFSPPSSQDSGLVSLSSSSPMSNESSKGVLECESASSEPSSYAVNQVLEEDEDE</original>
    <variation>DEDLREPPPSELPVPDALILRASLLPGPEHVPDLYLRGRPLLLRSQSQCVLAPQQSRFWLGLPLQQLSDEQRELEGSSGM</variation>
    <location>
        <begin position="178"/>
        <end position="374"/>
    </location>
</feature>
<feature type="splice variant" id="VSP_042965" description="In isoform 2." evidence="11">
    <location>
        <begin position="213"/>
        <end position="374"/>
    </location>
</feature>
<feature type="sequence conflict" description="In Ref. 1; AAF12826." evidence="12" ref="1">
    <original>Q</original>
    <variation>K</variation>
    <location>
        <position position="25"/>
    </location>
</feature>
<feature type="sequence conflict" description="In Ref. 2; CAB62040." evidence="12" ref="2">
    <original>F</original>
    <variation>L</variation>
    <location>
        <position position="306"/>
    </location>
</feature>
<feature type="sequence conflict" description="In Ref. 2; CAB62040." evidence="12" ref="2">
    <original>N</original>
    <variation>S</variation>
    <location>
        <position position="365"/>
    </location>
</feature>
<keyword id="KW-0010">Activator</keyword>
<keyword id="KW-0025">Alternative splicing</keyword>
<keyword id="KW-0217">Developmental protein</keyword>
<keyword id="KW-0221">Differentiation</keyword>
<keyword id="KW-0238">DNA-binding</keyword>
<keyword id="KW-0479">Metal-binding</keyword>
<keyword id="KW-0539">Nucleus</keyword>
<keyword id="KW-0597">Phosphoprotein</keyword>
<keyword id="KW-1185">Reference proteome</keyword>
<keyword id="KW-0678">Repressor</keyword>
<keyword id="KW-0726">Sexual differentiation</keyword>
<keyword id="KW-0804">Transcription</keyword>
<keyword id="KW-0805">Transcription regulation</keyword>
<keyword id="KW-0043">Tumor suppressor</keyword>
<keyword id="KW-0862">Zinc</keyword>
<dbReference type="EMBL" id="AF202778">
    <property type="protein sequence ID" value="AAF12826.1"/>
    <property type="molecule type" value="mRNA"/>
</dbReference>
<dbReference type="EMBL" id="AL133300">
    <property type="protein sequence ID" value="CAB62040.1"/>
    <property type="molecule type" value="mRNA"/>
</dbReference>
<dbReference type="EMBL" id="AY169785">
    <property type="protein sequence ID" value="AAO41733.1"/>
    <property type="molecule type" value="mRNA"/>
</dbReference>
<dbReference type="EMBL" id="AY169786">
    <property type="protein sequence ID" value="AAO41734.1"/>
    <property type="molecule type" value="mRNA"/>
</dbReference>
<dbReference type="EMBL" id="AY169787">
    <property type="protein sequence ID" value="AAO41735.1"/>
    <property type="molecule type" value="mRNA"/>
</dbReference>
<dbReference type="EMBL" id="AY943925">
    <property type="protein sequence ID" value="AAY20941.1"/>
    <property type="molecule type" value="mRNA"/>
</dbReference>
<dbReference type="EMBL" id="DQ530630">
    <property type="protein sequence ID" value="ABF83854.1"/>
    <property type="molecule type" value="mRNA"/>
</dbReference>
<dbReference type="EMBL" id="AC132140">
    <property type="status" value="NOT_ANNOTATED_CDS"/>
    <property type="molecule type" value="Genomic_DNA"/>
</dbReference>
<dbReference type="EMBL" id="CH466534">
    <property type="protein sequence ID" value="EDL41631.1"/>
    <property type="molecule type" value="Genomic_DNA"/>
</dbReference>
<dbReference type="EMBL" id="BC125474">
    <property type="protein sequence ID" value="AAI25475.1"/>
    <property type="molecule type" value="mRNA"/>
</dbReference>
<dbReference type="EMBL" id="AF192561">
    <property type="protein sequence ID" value="AAF05764.1"/>
    <property type="molecule type" value="mRNA"/>
</dbReference>
<dbReference type="CCDS" id="CCDS29717.1">
    <molecule id="Q9QZ59-1"/>
</dbReference>
<dbReference type="RefSeq" id="NP_056641.2">
    <molecule id="Q9QZ59-1"/>
    <property type="nucleotide sequence ID" value="NM_015826.5"/>
</dbReference>
<dbReference type="SMR" id="Q9QZ59"/>
<dbReference type="FunCoup" id="Q9QZ59">
    <property type="interactions" value="2006"/>
</dbReference>
<dbReference type="IntAct" id="Q9QZ59">
    <property type="interactions" value="1"/>
</dbReference>
<dbReference type="STRING" id="10090.ENSMUSP00000025755"/>
<dbReference type="GlyGen" id="Q9QZ59">
    <property type="glycosylation" value="2 sites, 1 O-linked glycan (1 site)"/>
</dbReference>
<dbReference type="iPTMnet" id="Q9QZ59"/>
<dbReference type="PhosphoSitePlus" id="Q9QZ59"/>
<dbReference type="SwissPalm" id="Q9QZ59"/>
<dbReference type="PaxDb" id="10090-ENSMUSP00000025755"/>
<dbReference type="ProteomicsDB" id="279730">
    <molecule id="Q9QZ59-1"/>
</dbReference>
<dbReference type="ProteomicsDB" id="279731">
    <molecule id="Q9QZ59-2"/>
</dbReference>
<dbReference type="ProteomicsDB" id="279732">
    <molecule id="Q9QZ59-3"/>
</dbReference>
<dbReference type="ProteomicsDB" id="279733">
    <molecule id="Q9QZ59-4"/>
</dbReference>
<dbReference type="Antibodypedia" id="23777">
    <property type="antibodies" value="327 antibodies from 26 providers"/>
</dbReference>
<dbReference type="DNASU" id="50796"/>
<dbReference type="Ensembl" id="ENSMUST00000025755.11">
    <molecule id="Q9QZ59-1"/>
    <property type="protein sequence ID" value="ENSMUSP00000025755.5"/>
    <property type="gene ID" value="ENSMUSG00000024837.16"/>
</dbReference>
<dbReference type="Ensembl" id="ENSMUST00000087525.5">
    <molecule id="Q9QZ59-4"/>
    <property type="protein sequence ID" value="ENSMUSP00000084803.5"/>
    <property type="gene ID" value="ENSMUSG00000024837.16"/>
</dbReference>
<dbReference type="GeneID" id="50796"/>
<dbReference type="KEGG" id="mmu:50796"/>
<dbReference type="UCSC" id="uc008hbi.1">
    <molecule id="Q9QZ59-1"/>
    <property type="organism name" value="mouse"/>
</dbReference>
<dbReference type="UCSC" id="uc012bjv.1">
    <molecule id="Q9QZ59-4"/>
    <property type="organism name" value="mouse"/>
</dbReference>
<dbReference type="AGR" id="MGI:1354733"/>
<dbReference type="CTD" id="1761"/>
<dbReference type="MGI" id="MGI:1354733">
    <property type="gene designation" value="Dmrt1"/>
</dbReference>
<dbReference type="VEuPathDB" id="HostDB:ENSMUSG00000024837"/>
<dbReference type="eggNOG" id="KOG3815">
    <property type="taxonomic scope" value="Eukaryota"/>
</dbReference>
<dbReference type="GeneTree" id="ENSGT00940000156489"/>
<dbReference type="HOGENOM" id="CLU_069148_0_0_1"/>
<dbReference type="InParanoid" id="Q9QZ59"/>
<dbReference type="OMA" id="CLMTECS"/>
<dbReference type="OrthoDB" id="9946337at2759"/>
<dbReference type="TreeFam" id="TF317837"/>
<dbReference type="BioGRID-ORCS" id="50796">
    <property type="hits" value="3 hits in 77 CRISPR screens"/>
</dbReference>
<dbReference type="ChiTaRS" id="Dmrt1">
    <property type="organism name" value="mouse"/>
</dbReference>
<dbReference type="PRO" id="PR:Q9QZ59"/>
<dbReference type="Proteomes" id="UP000000589">
    <property type="component" value="Chromosome 19"/>
</dbReference>
<dbReference type="RNAct" id="Q9QZ59">
    <property type="molecule type" value="protein"/>
</dbReference>
<dbReference type="Bgee" id="ENSMUSG00000024837">
    <property type="expression patterns" value="Expressed in indifferent gonad and 26 other cell types or tissues"/>
</dbReference>
<dbReference type="GO" id="GO:0005737">
    <property type="term" value="C:cytoplasm"/>
    <property type="evidence" value="ECO:0000314"/>
    <property type="project" value="MGI"/>
</dbReference>
<dbReference type="GO" id="GO:0001674">
    <property type="term" value="C:female germ cell nucleus"/>
    <property type="evidence" value="ECO:0000314"/>
    <property type="project" value="MGI"/>
</dbReference>
<dbReference type="GO" id="GO:0005654">
    <property type="term" value="C:nucleoplasm"/>
    <property type="evidence" value="ECO:0000304"/>
    <property type="project" value="Reactome"/>
</dbReference>
<dbReference type="GO" id="GO:0005634">
    <property type="term" value="C:nucleus"/>
    <property type="evidence" value="ECO:0000314"/>
    <property type="project" value="UniProtKB"/>
</dbReference>
<dbReference type="GO" id="GO:0003682">
    <property type="term" value="F:chromatin binding"/>
    <property type="evidence" value="ECO:0000314"/>
    <property type="project" value="MGI"/>
</dbReference>
<dbReference type="GO" id="GO:0000987">
    <property type="term" value="F:cis-regulatory region sequence-specific DNA binding"/>
    <property type="evidence" value="ECO:0000314"/>
    <property type="project" value="UniProtKB"/>
</dbReference>
<dbReference type="GO" id="GO:0001228">
    <property type="term" value="F:DNA-binding transcription activator activity, RNA polymerase II-specific"/>
    <property type="evidence" value="ECO:0000314"/>
    <property type="project" value="NTNU_SB"/>
</dbReference>
<dbReference type="GO" id="GO:0042802">
    <property type="term" value="F:identical protein binding"/>
    <property type="evidence" value="ECO:0000353"/>
    <property type="project" value="MGI"/>
</dbReference>
<dbReference type="GO" id="GO:0046872">
    <property type="term" value="F:metal ion binding"/>
    <property type="evidence" value="ECO:0007669"/>
    <property type="project" value="UniProtKB-KW"/>
</dbReference>
<dbReference type="GO" id="GO:0000977">
    <property type="term" value="F:RNA polymerase II transcription regulatory region sequence-specific DNA binding"/>
    <property type="evidence" value="ECO:0000314"/>
    <property type="project" value="NTNU_SB"/>
</dbReference>
<dbReference type="GO" id="GO:0043565">
    <property type="term" value="F:sequence-specific DNA binding"/>
    <property type="evidence" value="ECO:0000314"/>
    <property type="project" value="MGI"/>
</dbReference>
<dbReference type="GO" id="GO:0000902">
    <property type="term" value="P:cell morphogenesis"/>
    <property type="evidence" value="ECO:0000315"/>
    <property type="project" value="MGI"/>
</dbReference>
<dbReference type="GO" id="GO:0003006">
    <property type="term" value="P:developmental process involved in reproduction"/>
    <property type="evidence" value="ECO:0000316"/>
    <property type="project" value="MGI"/>
</dbReference>
<dbReference type="GO" id="GO:0008354">
    <property type="term" value="P:germ cell migration"/>
    <property type="evidence" value="ECO:0000315"/>
    <property type="project" value="MGI"/>
</dbReference>
<dbReference type="GO" id="GO:0035556">
    <property type="term" value="P:intracellular signal transduction"/>
    <property type="evidence" value="ECO:0007669"/>
    <property type="project" value="Ensembl"/>
</dbReference>
<dbReference type="GO" id="GO:0002176">
    <property type="term" value="P:male germ cell proliferation"/>
    <property type="evidence" value="ECO:0000315"/>
    <property type="project" value="UniProtKB"/>
</dbReference>
<dbReference type="GO" id="GO:0008584">
    <property type="term" value="P:male gonad development"/>
    <property type="evidence" value="ECO:0000315"/>
    <property type="project" value="MGI"/>
</dbReference>
<dbReference type="GO" id="GO:0030238">
    <property type="term" value="P:male sex determination"/>
    <property type="evidence" value="ECO:0000315"/>
    <property type="project" value="UniProtKB"/>
</dbReference>
<dbReference type="GO" id="GO:0046661">
    <property type="term" value="P:male sex differentiation"/>
    <property type="evidence" value="ECO:0000315"/>
    <property type="project" value="UniProtKB"/>
</dbReference>
<dbReference type="GO" id="GO:0007127">
    <property type="term" value="P:meiosis I"/>
    <property type="evidence" value="ECO:0000315"/>
    <property type="project" value="MGI"/>
</dbReference>
<dbReference type="GO" id="GO:0045835">
    <property type="term" value="P:negative regulation of meiotic nuclear division"/>
    <property type="evidence" value="ECO:0000315"/>
    <property type="project" value="UniProtKB"/>
</dbReference>
<dbReference type="GO" id="GO:0000122">
    <property type="term" value="P:negative regulation of transcription by RNA polymerase II"/>
    <property type="evidence" value="ECO:0000314"/>
    <property type="project" value="UniProtKB"/>
</dbReference>
<dbReference type="GO" id="GO:0048599">
    <property type="term" value="P:oocyte development"/>
    <property type="evidence" value="ECO:0000315"/>
    <property type="project" value="MGI"/>
</dbReference>
<dbReference type="GO" id="GO:2000020">
    <property type="term" value="P:positive regulation of male gonad development"/>
    <property type="evidence" value="ECO:0000315"/>
    <property type="project" value="MGI"/>
</dbReference>
<dbReference type="GO" id="GO:0060903">
    <property type="term" value="P:positive regulation of meiosis I"/>
    <property type="evidence" value="ECO:0000315"/>
    <property type="project" value="MGI"/>
</dbReference>
<dbReference type="GO" id="GO:0045840">
    <property type="term" value="P:positive regulation of mitotic nuclear division"/>
    <property type="evidence" value="ECO:0000315"/>
    <property type="project" value="UniProtKB"/>
</dbReference>
<dbReference type="GO" id="GO:0045944">
    <property type="term" value="P:positive regulation of transcription by RNA polymerase II"/>
    <property type="evidence" value="ECO:0000314"/>
    <property type="project" value="UniProtKB"/>
</dbReference>
<dbReference type="GO" id="GO:1900107">
    <property type="term" value="P:regulation of nodal signaling pathway"/>
    <property type="evidence" value="ECO:0000315"/>
    <property type="project" value="MGI"/>
</dbReference>
<dbReference type="GO" id="GO:0060009">
    <property type="term" value="P:Sertoli cell development"/>
    <property type="evidence" value="ECO:0000315"/>
    <property type="project" value="MGI"/>
</dbReference>
<dbReference type="GO" id="GO:0060008">
    <property type="term" value="P:Sertoli cell differentiation"/>
    <property type="evidence" value="ECO:0000315"/>
    <property type="project" value="UniProtKB"/>
</dbReference>
<dbReference type="GO" id="GO:0007283">
    <property type="term" value="P:spermatogenesis"/>
    <property type="evidence" value="ECO:0000315"/>
    <property type="project" value="MGI"/>
</dbReference>
<dbReference type="FunFam" id="4.10.1040.10:FF:000001">
    <property type="entry name" value="doublesex- and mab-3-related transcription factor 1"/>
    <property type="match status" value="1"/>
</dbReference>
<dbReference type="Gene3D" id="4.10.1040.10">
    <property type="entry name" value="DM DNA-binding domain"/>
    <property type="match status" value="1"/>
</dbReference>
<dbReference type="InterPro" id="IPR001275">
    <property type="entry name" value="DM_DNA-bd"/>
</dbReference>
<dbReference type="InterPro" id="IPR036407">
    <property type="entry name" value="DM_DNA-bd_sf"/>
</dbReference>
<dbReference type="InterPro" id="IPR026607">
    <property type="entry name" value="DMRT"/>
</dbReference>
<dbReference type="InterPro" id="IPR022114">
    <property type="entry name" value="DMRT1-like"/>
</dbReference>
<dbReference type="PANTHER" id="PTHR12322">
    <property type="entry name" value="DOUBLESEX AND MAB-3 RELATED TRANSCRIPTION FACTOR DMRT"/>
    <property type="match status" value="1"/>
</dbReference>
<dbReference type="PANTHER" id="PTHR12322:SF70">
    <property type="entry name" value="DOUBLESEX- AND MAB-3-RELATED TRANSCRIPTION FACTOR 1"/>
    <property type="match status" value="1"/>
</dbReference>
<dbReference type="Pfam" id="PF00751">
    <property type="entry name" value="DM"/>
    <property type="match status" value="1"/>
</dbReference>
<dbReference type="Pfam" id="PF12374">
    <property type="entry name" value="Dmrt1"/>
    <property type="match status" value="1"/>
</dbReference>
<dbReference type="SMART" id="SM00301">
    <property type="entry name" value="DM"/>
    <property type="match status" value="1"/>
</dbReference>
<dbReference type="SUPFAM" id="SSF82927">
    <property type="entry name" value="Cysteine-rich DNA binding domain, (DM domain)"/>
    <property type="match status" value="1"/>
</dbReference>
<dbReference type="PROSITE" id="PS40000">
    <property type="entry name" value="DM_1"/>
    <property type="match status" value="1"/>
</dbReference>
<dbReference type="PROSITE" id="PS50809">
    <property type="entry name" value="DM_2"/>
    <property type="match status" value="1"/>
</dbReference>
<evidence type="ECO:0000255" key="1">
    <source>
        <dbReference type="PROSITE-ProRule" id="PRU00070"/>
    </source>
</evidence>
<evidence type="ECO:0000256" key="2">
    <source>
        <dbReference type="SAM" id="MobiDB-lite"/>
    </source>
</evidence>
<evidence type="ECO:0000269" key="3">
    <source>
    </source>
</evidence>
<evidence type="ECO:0000269" key="4">
    <source>
    </source>
</evidence>
<evidence type="ECO:0000269" key="5">
    <source>
    </source>
</evidence>
<evidence type="ECO:0000269" key="6">
    <source>
    </source>
</evidence>
<evidence type="ECO:0000269" key="7">
    <source>
    </source>
</evidence>
<evidence type="ECO:0000269" key="8">
    <source>
    </source>
</evidence>
<evidence type="ECO:0000269" key="9">
    <source>
    </source>
</evidence>
<evidence type="ECO:0000269" key="10">
    <source>
    </source>
</evidence>
<evidence type="ECO:0000303" key="11">
    <source>
    </source>
</evidence>
<evidence type="ECO:0000305" key="12"/>
<evidence type="ECO:0007744" key="13">
    <source>
    </source>
</evidence>
<organism>
    <name type="scientific">Mus musculus</name>
    <name type="common">Mouse</name>
    <dbReference type="NCBI Taxonomy" id="10090"/>
    <lineage>
        <taxon>Eukaryota</taxon>
        <taxon>Metazoa</taxon>
        <taxon>Chordata</taxon>
        <taxon>Craniata</taxon>
        <taxon>Vertebrata</taxon>
        <taxon>Euteleostomi</taxon>
        <taxon>Mammalia</taxon>
        <taxon>Eutheria</taxon>
        <taxon>Euarchontoglires</taxon>
        <taxon>Glires</taxon>
        <taxon>Rodentia</taxon>
        <taxon>Myomorpha</taxon>
        <taxon>Muroidea</taxon>
        <taxon>Muridae</taxon>
        <taxon>Murinae</taxon>
        <taxon>Mus</taxon>
        <taxon>Mus</taxon>
    </lineage>
</organism>
<accession>Q9QZ59</accession>
<accession>Q19AV2</accession>
<accession>Q2TDQ9</accession>
<accession>Q6Y951</accession>
<accession>Q6Y953</accession>
<accession>Q9QZ37</accession>
<accession>Q9QZA4</accession>
<reference key="1">
    <citation type="journal article" date="1999" name="Dev. Biol.">
        <title>Expression of Dmrt1 in the genital ridge of mouse and chicken embryos suggests a role in vertebrate sexual development.</title>
        <authorList>
            <person name="Raymond C.S."/>
            <person name="Kettlewell J.R."/>
            <person name="Hirsch B."/>
            <person name="Bardwell V.J."/>
            <person name="Zarkower D."/>
        </authorList>
    </citation>
    <scope>NUCLEOTIDE SEQUENCE [MRNA] (ISOFORM 1)</scope>
    <scope>DEVELOPMENTAL STAGE</scope>
    <source>
        <strain>C57BL/6J</strain>
        <tissue>Testis</tissue>
    </source>
</reference>
<reference key="2">
    <citation type="journal article" date="2000" name="Mech. Dev.">
        <title>The expression pattern of a mouse doublesex-related gene is consistent with a role in gonadal differentiation.</title>
        <authorList>
            <person name="De Grandi A."/>
            <person name="Calvari V."/>
            <person name="Bertini V."/>
            <person name="Bulfone A."/>
            <person name="Peverali G."/>
            <person name="Camerino G."/>
            <person name="Borsani G."/>
            <person name="Guioli S."/>
        </authorList>
    </citation>
    <scope>NUCLEOTIDE SEQUENCE [MRNA] (ISOFORM 1)</scope>
    <source>
        <strain>BALB/cJ</strain>
        <tissue>Testis</tissue>
    </source>
</reference>
<reference key="3">
    <citation type="journal article" date="2007" name="Biochem. Biophys. Res. Commun.">
        <title>Multiple alternative splicing of mouse Dmrt1 during gonadal differentiation.</title>
        <authorList>
            <person name="Lu H."/>
            <person name="Huang X."/>
            <person name="Zhang L."/>
            <person name="Guo Y."/>
            <person name="Cheng H."/>
            <person name="Zhou R."/>
        </authorList>
    </citation>
    <scope>NUCLEOTIDE SEQUENCE [MRNA] (ISOFORMS 1; 2; 3 AND 4)</scope>
    <source>
        <strain>Kunming</strain>
    </source>
</reference>
<reference key="4">
    <citation type="journal article" date="2009" name="PLoS Biol.">
        <title>Lineage-specific biology revealed by a finished genome assembly of the mouse.</title>
        <authorList>
            <person name="Church D.M."/>
            <person name="Goodstadt L."/>
            <person name="Hillier L.W."/>
            <person name="Zody M.C."/>
            <person name="Goldstein S."/>
            <person name="She X."/>
            <person name="Bult C.J."/>
            <person name="Agarwala R."/>
            <person name="Cherry J.L."/>
            <person name="DiCuccio M."/>
            <person name="Hlavina W."/>
            <person name="Kapustin Y."/>
            <person name="Meric P."/>
            <person name="Maglott D."/>
            <person name="Birtle Z."/>
            <person name="Marques A.C."/>
            <person name="Graves T."/>
            <person name="Zhou S."/>
            <person name="Teague B."/>
            <person name="Potamousis K."/>
            <person name="Churas C."/>
            <person name="Place M."/>
            <person name="Herschleb J."/>
            <person name="Runnheim R."/>
            <person name="Forrest D."/>
            <person name="Amos-Landgraf J."/>
            <person name="Schwartz D.C."/>
            <person name="Cheng Z."/>
            <person name="Lindblad-Toh K."/>
            <person name="Eichler E.E."/>
            <person name="Ponting C.P."/>
        </authorList>
    </citation>
    <scope>NUCLEOTIDE SEQUENCE [LARGE SCALE GENOMIC DNA]</scope>
    <source>
        <strain>C57BL/6J</strain>
    </source>
</reference>
<reference key="5">
    <citation type="submission" date="2005-07" db="EMBL/GenBank/DDBJ databases">
        <authorList>
            <person name="Mural R.J."/>
            <person name="Adams M.D."/>
            <person name="Myers E.W."/>
            <person name="Smith H.O."/>
            <person name="Venter J.C."/>
        </authorList>
    </citation>
    <scope>NUCLEOTIDE SEQUENCE [LARGE SCALE GENOMIC DNA]</scope>
</reference>
<reference key="6">
    <citation type="journal article" date="2004" name="Genome Res.">
        <title>The status, quality, and expansion of the NIH full-length cDNA project: the Mammalian Gene Collection (MGC).</title>
        <authorList>
            <consortium name="The MGC Project Team"/>
        </authorList>
    </citation>
    <scope>NUCLEOTIDE SEQUENCE [LARGE SCALE MRNA] (ISOFORM 1)</scope>
    <source>
        <tissue>Brain</tissue>
    </source>
</reference>
<reference key="7">
    <citation type="journal article" date="1999" name="Nature">
        <title>Conservation of a sex-determining gene.</title>
        <authorList>
            <person name="Smith C.A."/>
            <person name="McClive P.J."/>
            <person name="Western P.S."/>
            <person name="Reed K.J."/>
            <person name="Sinclair A.H."/>
        </authorList>
    </citation>
    <scope>NUCLEOTIDE SEQUENCE [MRNA] OF 104-203 (ISOFORM 1)</scope>
    <source>
        <tissue>Embryonic testis</tissue>
    </source>
</reference>
<reference key="8">
    <citation type="journal article" date="2000" name="Genes Dev.">
        <title>Dmrt1, a gene related to worm and fly sexual regulators, is required for mammalian testis differentiation.</title>
        <authorList>
            <person name="Raymond C.S."/>
            <person name="Murphy M.W."/>
            <person name="O'Sullivan M.G."/>
            <person name="Bardwell V.J."/>
            <person name="Zarkower D."/>
        </authorList>
    </citation>
    <scope>FUNCTION</scope>
    <scope>SUBCELLULAR LOCATION</scope>
    <scope>TISSUE SPECIFICITY</scope>
    <scope>DEVELOPMENTAL STAGE</scope>
    <scope>DISRUPTION PHENOTYPE</scope>
</reference>
<reference key="9">
    <citation type="journal article" date="2007" name="Dev. Biol.">
        <title>Cell type-autonomous and non-autonomous requirements for Dmrt1 in postnatal testis differentiation.</title>
        <authorList>
            <person name="Kim S."/>
            <person name="Bardwell V.J."/>
            <person name="Zarkower D."/>
        </authorList>
    </citation>
    <scope>FUNCTION</scope>
</reference>
<reference key="10">
    <citation type="journal article" date="2009" name="Proc. Natl. Acad. Sci. U.S.A.">
        <title>The DM domain protein DMRT1 is a dose-sensitive regulator of fetal germ cell proliferation and pluripotency.</title>
        <authorList>
            <person name="Krentz A.D."/>
            <person name="Murphy M.W."/>
            <person name="Kim S."/>
            <person name="Cook M.S."/>
            <person name="Capel B."/>
            <person name="Zhu R."/>
            <person name="Matin A."/>
            <person name="Sarver A.L."/>
            <person name="Parker K.L."/>
            <person name="Griswold M.D."/>
            <person name="Looijenga L.H."/>
            <person name="Bardwell V.J."/>
            <person name="Zarkower D."/>
        </authorList>
    </citation>
    <scope>FUNCTION</scope>
    <scope>DISRUPTION PHENOTYPE</scope>
    <source>
        <strain>129/Sv</strain>
    </source>
</reference>
<reference key="11">
    <citation type="journal article" date="2010" name="Cell">
        <title>A tissue-specific atlas of mouse protein phosphorylation and expression.</title>
        <authorList>
            <person name="Huttlin E.L."/>
            <person name="Jedrychowski M.P."/>
            <person name="Elias J.E."/>
            <person name="Goswami T."/>
            <person name="Rad R."/>
            <person name="Beausoleil S.A."/>
            <person name="Villen J."/>
            <person name="Haas W."/>
            <person name="Sowa M.E."/>
            <person name="Gygi S.P."/>
        </authorList>
    </citation>
    <scope>PHOSPHORYLATION [LARGE SCALE ANALYSIS] AT SER-337</scope>
    <scope>IDENTIFICATION BY MASS SPECTROMETRY [LARGE SCALE ANALYSIS]</scope>
    <source>
        <tissue>Testis</tissue>
    </source>
</reference>
<reference key="12">
    <citation type="journal article" date="2010" name="Proc. Natl. Acad. Sci. U.S.A.">
        <title>Genome-wide analysis of DNA binding and transcriptional regulation by the mammalian Doublesex homolog DMRT1 in the juvenile testis.</title>
        <authorList>
            <person name="Murphy M.W."/>
            <person name="Sarver A.L."/>
            <person name="Rice D."/>
            <person name="Hatzi K."/>
            <person name="Ye K."/>
            <person name="Melnick A."/>
            <person name="Heckert L.L."/>
            <person name="Zarkower D."/>
            <person name="Bardwell V.J."/>
        </authorList>
    </citation>
    <scope>FUNCTION</scope>
    <scope>DNA-BINDING</scope>
</reference>
<reference key="13">
    <citation type="journal article" date="2010" name="Dev. Cell">
        <title>The mammalian doublesex homolog DMRT1 is a transcriptional gatekeeper that controls the mitosis versus meiosis decision in male germ cells.</title>
        <authorList>
            <person name="Matson C.K."/>
            <person name="Murphy M.W."/>
            <person name="Griswold M.D."/>
            <person name="Yoshida S."/>
            <person name="Bardwell V.J."/>
            <person name="Zarkower D."/>
        </authorList>
    </citation>
    <scope>FUNCTION</scope>
    <scope>DNA-BINDING</scope>
    <scope>TISSUE SPECIFICITY</scope>
</reference>
<reference key="14">
    <citation type="journal article" date="2011" name="Dev. Biol.">
        <title>DMRT1 promotes oogenesis by transcriptional activation of Stra8 in the mammalian fetal ovary.</title>
        <authorList>
            <person name="Krentz A.D."/>
            <person name="Murphy M.W."/>
            <person name="Sarver A.L."/>
            <person name="Griswold M.D."/>
            <person name="Bardwell V.J."/>
            <person name="Zarkower D."/>
        </authorList>
    </citation>
    <scope>FUNCTION</scope>
</reference>
<reference key="15">
    <citation type="journal article" date="2011" name="Nature">
        <title>DMRT1 prevents female reprogramming in the postnatal mammalian testis.</title>
        <authorList>
            <person name="Matson C.K."/>
            <person name="Murphy M.W."/>
            <person name="Sarver A.L."/>
            <person name="Griswold M.D."/>
            <person name="Bardwell V.J."/>
            <person name="Zarkower D."/>
        </authorList>
    </citation>
    <scope>FUNCTION</scope>
    <scope>DISRUPTION PHENOTYPE</scope>
</reference>
<reference key="16">
    <citation type="journal article" date="2011" name="Nature">
        <authorList>
            <person name="Matson C.K."/>
            <person name="Murphy M.W."/>
            <person name="Sarver A.L."/>
            <person name="Griswold M.D."/>
            <person name="Bardwell V.J."/>
            <person name="Zarkower D."/>
        </authorList>
    </citation>
    <scope>ERRATUM OF PUBMED:21775990</scope>
</reference>
<proteinExistence type="evidence at protein level"/>
<comment type="function">
    <text evidence="4 5 6 7 8 9 10">Transcription factor that plays a key role in male sex determination and differentiation by controlling testis development and male germ cell proliferation. Plays a central role in spermatogonia by inhibiting meiosis in undifferentiated spermatogonia and promoting mitosis, leading to spermatogonial development and allowing abundant and continuous production of sperm. Acts both as a transcription repressor and activator: prevents meiosis by restricting retinoic acid (RA)-dependent transcription and repressing STRA8 expression and promotes spermatogonial development by activating spermatogonial differentiation genes, such as SOHLH1. Also plays a key role in postnatal sex maintenance by maintaining testis determination and preventing feminization: represses transcription of female promoting genes such as FOXL2 and activates male-specific genes. May act as a tumor suppressor. May also play a minor role in oogenesis.</text>
</comment>
<comment type="subcellular location">
    <subcellularLocation>
        <location evidence="1 4">Nucleus</location>
    </subcellularLocation>
</comment>
<comment type="alternative products">
    <event type="alternative splicing"/>
    <isoform>
        <id>Q9QZ59-1</id>
        <name>1</name>
        <name>Dmrt1a</name>
        <name>Dmrt1a1</name>
        <name>Dmrt1a2</name>
        <name>Dmrt1a3</name>
        <sequence type="displayed"/>
    </isoform>
    <isoform>
        <id>Q9QZ59-2</id>
        <name>2</name>
        <name>Dmrt1b</name>
        <name>DMR1g</name>
        <name>Dmrt1g</name>
        <sequence type="described" ref="VSP_042965"/>
    </isoform>
    <isoform>
        <id>Q9QZ59-3</id>
        <name>3</name>
        <name>Dmrt1d</name>
        <sequence type="described" ref="VSP_042963"/>
    </isoform>
    <isoform>
        <id>Q9QZ59-4</id>
        <name>4</name>
        <name>Dmrt1c</name>
        <sequence type="described" ref="VSP_042964"/>
    </isoform>
</comment>
<comment type="tissue specificity">
    <text evidence="4 8">Testis-specific. In adult testis, expressed in Sertoli cells in all regions of the seminiferous tubules. Expressed dynamically in premeiotic germ cells (spermatogonia), with high expression only in regions of the seminiferous tubule that are early in the spermatogenic cycle (at protein level). Expressed in all mitotic spermatogonia. Expression decreases with the onset of spermatogonial differentiation and disappears at the initiation of meiosis.</text>
</comment>
<comment type="developmental stage">
    <text evidence="3 4">Detected already at 9.5 dpc. At 10.5 dpc, expressed in the genital ridges of both sexes. At 14.5 dpc, during gonadal sexual differentiation, expression declines in the ovary, but is maintained in the testis, where it becomes restricted to Sertoli and germ cells in the developing seminiferous tubules of the testis. Accumulates primarily in Sertoli cells. From P1, appears in germ cells and reach high levels by P7, just before meiosis begins. From P7 through adult stage, present in Sertoli cells and undifferentiated germ cells, but not in differentiating germ cells.</text>
</comment>
<comment type="disruption phenotype">
    <text evidence="4 6 10">Severe defects in the adult testis with hypoplastic testes and disorganization of seminiferous tubules and absence of germ cells, due to pre-meiotic germ cell death in testes. Sertoli cell fail to differentiate. Female mutant mice have normal ovaries and are fertile. Depending on the strain background mice also show testis teratomas: deletion in 129/Sv strain causes a high incidence of teratomas, whereas these tumors do not form in C57BL/6J mutant mice. Deletion of Dmrt1 during fetal development causes postnatal Sertoli cells to lose male-promoting Sox9 and instead activation of female-promoting genes such as Foxl2, leading to reprogrammation of Sertoli cells into granulosa cells. As a consequence, theca cells form, estrogen is produced and germ cells appear feminized.</text>
</comment>
<comment type="similarity">
    <text evidence="12">Belongs to the DMRT family.</text>
</comment>
<sequence length="374" mass="39444">MPNDDTFGKPSTPTEVPHAPGAPPQGKAGGYSKAAGAMAGAAGGSGAGGSGGASGSGPSGLGSGSKKSPRLPKCARCRNHGYASPLKGHKRFCMWRDCQCKKCSLIAERQRVMAAQVALRRQQAQEEELGISHPIPLPSAAELLVKRENNASNPCLMAENSSSAQPPPASTPTPAASEGRMVIQDIPAVTSRGHMENTSDLVSDPAYYSSFYQPSLFPYYNNLYNYPQYSMALSAESSSGEVGNSLGGSPVKNSLRSLPAPYVPAQTGNQWQMKTSESRHPVSSQYRMHSYYGPPSYLGQSMSQIFTFEEGPSYSEAKASVFSPPSSQDSGLVSLSSSSPMSNESSKGVLECESASSEPSSYAVNQVLEEDEDE</sequence>
<name>DMRT1_MOUSE</name>
<gene>
    <name type="primary">Dmrt1</name>
</gene>